<sequence>KLCAIWIYLDVLFSTASIMHLCAISLDRYVAIQNPIHHSRFNSRTKAFLKIIAVWTISVGISMPVPVFGLQDDSKVFKEGSCLLADDNFVLIGSFVAFFIPLTIMVITYFLTIKSLQKEATLCVSDPGTRAKLSSFSFLPQSSLSSEKLFQRSIHRETGSYAGRRTMQSISNEQKACKVLGIVFFLFVVMWCPFFVTNIMAVICKESCNEDVIGALLNVFVWIGYLSSAVNPLVYTLFNKTYRSAFA</sequence>
<organism>
    <name type="scientific">Cavia porcellus</name>
    <name type="common">Guinea pig</name>
    <dbReference type="NCBI Taxonomy" id="10141"/>
    <lineage>
        <taxon>Eukaryota</taxon>
        <taxon>Metazoa</taxon>
        <taxon>Chordata</taxon>
        <taxon>Craniata</taxon>
        <taxon>Vertebrata</taxon>
        <taxon>Euteleostomi</taxon>
        <taxon>Mammalia</taxon>
        <taxon>Eutheria</taxon>
        <taxon>Euarchontoglires</taxon>
        <taxon>Glires</taxon>
        <taxon>Rodentia</taxon>
        <taxon>Hystricomorpha</taxon>
        <taxon>Caviidae</taxon>
        <taxon>Cavia</taxon>
    </lineage>
</organism>
<dbReference type="EMBL" id="M85162">
    <property type="protein sequence ID" value="AAA21022.1"/>
    <property type="molecule type" value="mRNA"/>
</dbReference>
<dbReference type="PIR" id="I48149">
    <property type="entry name" value="I48149"/>
</dbReference>
<dbReference type="SMR" id="P35382"/>
<dbReference type="STRING" id="10141.ENSCPOP00000032627"/>
<dbReference type="eggNOG" id="KOG3656">
    <property type="taxonomic scope" value="Eukaryota"/>
</dbReference>
<dbReference type="HOGENOM" id="CLU_009579_11_3_1"/>
<dbReference type="InParanoid" id="P35382"/>
<dbReference type="Proteomes" id="UP000005447">
    <property type="component" value="Unassembled WGS sequence"/>
</dbReference>
<dbReference type="GO" id="GO:0030424">
    <property type="term" value="C:axon"/>
    <property type="evidence" value="ECO:0007669"/>
    <property type="project" value="UniProtKB-SubCell"/>
</dbReference>
<dbReference type="GO" id="GO:0005901">
    <property type="term" value="C:caveola"/>
    <property type="evidence" value="ECO:0007669"/>
    <property type="project" value="UniProtKB-SubCell"/>
</dbReference>
<dbReference type="GO" id="GO:0031410">
    <property type="term" value="C:cytoplasmic vesicle"/>
    <property type="evidence" value="ECO:0007669"/>
    <property type="project" value="UniProtKB-KW"/>
</dbReference>
<dbReference type="GO" id="GO:0030425">
    <property type="term" value="C:dendrite"/>
    <property type="evidence" value="ECO:0007669"/>
    <property type="project" value="UniProtKB-SubCell"/>
</dbReference>
<dbReference type="GO" id="GO:0098793">
    <property type="term" value="C:presynapse"/>
    <property type="evidence" value="ECO:0007669"/>
    <property type="project" value="UniProtKB-SubCell"/>
</dbReference>
<dbReference type="GO" id="GO:0004993">
    <property type="term" value="F:G protein-coupled serotonin receptor activity"/>
    <property type="evidence" value="ECO:0007669"/>
    <property type="project" value="InterPro"/>
</dbReference>
<dbReference type="GO" id="GO:0030594">
    <property type="term" value="F:neurotransmitter receptor activity"/>
    <property type="evidence" value="ECO:0007669"/>
    <property type="project" value="TreeGrafter"/>
</dbReference>
<dbReference type="GO" id="GO:0007268">
    <property type="term" value="P:chemical synaptic transmission"/>
    <property type="evidence" value="ECO:0007669"/>
    <property type="project" value="TreeGrafter"/>
</dbReference>
<dbReference type="GO" id="GO:0007187">
    <property type="term" value="P:G protein-coupled receptor signaling pathway, coupled to cyclic nucleotide second messenger"/>
    <property type="evidence" value="ECO:0007669"/>
    <property type="project" value="TreeGrafter"/>
</dbReference>
<dbReference type="GO" id="GO:0007208">
    <property type="term" value="P:phospholipase C-activating serotonin receptor signaling pathway"/>
    <property type="evidence" value="ECO:0007669"/>
    <property type="project" value="TreeGrafter"/>
</dbReference>
<dbReference type="GO" id="GO:0051209">
    <property type="term" value="P:release of sequestered calcium ion into cytosol"/>
    <property type="evidence" value="ECO:0007669"/>
    <property type="project" value="TreeGrafter"/>
</dbReference>
<dbReference type="GO" id="GO:0009410">
    <property type="term" value="P:response to xenobiotic stimulus"/>
    <property type="evidence" value="ECO:0007669"/>
    <property type="project" value="TreeGrafter"/>
</dbReference>
<dbReference type="GO" id="GO:0007210">
    <property type="term" value="P:serotonin receptor signaling pathway"/>
    <property type="evidence" value="ECO:0007669"/>
    <property type="project" value="TreeGrafter"/>
</dbReference>
<dbReference type="FunFam" id="1.20.1070.10:FF:000523">
    <property type="entry name" value="5-hydroxytryptamine receptor 2B"/>
    <property type="match status" value="2"/>
</dbReference>
<dbReference type="Gene3D" id="1.20.1070.10">
    <property type="entry name" value="Rhodopsin 7-helix transmembrane proteins"/>
    <property type="match status" value="1"/>
</dbReference>
<dbReference type="InterPro" id="IPR000455">
    <property type="entry name" value="5HT2A_rcpt"/>
</dbReference>
<dbReference type="InterPro" id="IPR000276">
    <property type="entry name" value="GPCR_Rhodpsn"/>
</dbReference>
<dbReference type="InterPro" id="IPR017452">
    <property type="entry name" value="GPCR_Rhodpsn_7TM"/>
</dbReference>
<dbReference type="PANTHER" id="PTHR24247">
    <property type="entry name" value="5-HYDROXYTRYPTAMINE RECEPTOR"/>
    <property type="match status" value="1"/>
</dbReference>
<dbReference type="PANTHER" id="PTHR24247:SF30">
    <property type="entry name" value="5-HYDROXYTRYPTAMINE RECEPTOR 2A"/>
    <property type="match status" value="1"/>
</dbReference>
<dbReference type="Pfam" id="PF00001">
    <property type="entry name" value="7tm_1"/>
    <property type="match status" value="1"/>
</dbReference>
<dbReference type="PRINTS" id="PR00516">
    <property type="entry name" value="5HT2ARECEPTR"/>
</dbReference>
<dbReference type="PRINTS" id="PR00237">
    <property type="entry name" value="GPCRRHODOPSN"/>
</dbReference>
<dbReference type="SUPFAM" id="SSF81321">
    <property type="entry name" value="Family A G protein-coupled receptor-like"/>
    <property type="match status" value="1"/>
</dbReference>
<dbReference type="PROSITE" id="PS00237">
    <property type="entry name" value="G_PROTEIN_RECEP_F1_1"/>
    <property type="match status" value="1"/>
</dbReference>
<dbReference type="PROSITE" id="PS50262">
    <property type="entry name" value="G_PROTEIN_RECEP_F1_2"/>
    <property type="match status" value="1"/>
</dbReference>
<proteinExistence type="evidence at protein level"/>
<accession>P35382</accession>
<evidence type="ECO:0000250" key="1">
    <source>
        <dbReference type="UniProtKB" id="P14842"/>
    </source>
</evidence>
<evidence type="ECO:0000250" key="2">
    <source>
        <dbReference type="UniProtKB" id="P28223"/>
    </source>
</evidence>
<evidence type="ECO:0000250" key="3">
    <source>
        <dbReference type="UniProtKB" id="P35363"/>
    </source>
</evidence>
<evidence type="ECO:0000250" key="4">
    <source>
        <dbReference type="UniProtKB" id="P41595"/>
    </source>
</evidence>
<evidence type="ECO:0000255" key="5">
    <source>
        <dbReference type="PROSITE-ProRule" id="PRU00521"/>
    </source>
</evidence>
<evidence type="ECO:0000269" key="6">
    <source>
    </source>
</evidence>
<evidence type="ECO:0000269" key="7">
    <source>
    </source>
</evidence>
<gene>
    <name type="primary">HTR2A</name>
</gene>
<feature type="chain" id="PRO_0000068944" description="5-hydroxytryptamine receptor 2A">
    <location>
        <begin position="1" status="less than"/>
        <end position="247" status="greater than"/>
    </location>
</feature>
<feature type="topological domain" description="Extracellular" evidence="2">
    <location>
        <begin position="1" status="less than"/>
        <end position="1"/>
    </location>
</feature>
<feature type="transmembrane region" description="Helical; Name=3" evidence="2">
    <location>
        <begin position="2"/>
        <end position="26"/>
    </location>
</feature>
<feature type="topological domain" description="Cytoplasmic" evidence="2">
    <location>
        <begin position="27"/>
        <end position="46"/>
    </location>
</feature>
<feature type="transmembrane region" description="Helical; Name=4" evidence="2">
    <location>
        <begin position="47"/>
        <end position="70"/>
    </location>
</feature>
<feature type="topological domain" description="Extracellular" evidence="2">
    <location>
        <begin position="71"/>
        <end position="87"/>
    </location>
</feature>
<feature type="transmembrane region" description="Helical; Name=5" evidence="2">
    <location>
        <begin position="88"/>
        <end position="113"/>
    </location>
</feature>
<feature type="topological domain" description="Cytoplasmic" evidence="2">
    <location>
        <begin position="114"/>
        <end position="177"/>
    </location>
</feature>
<feature type="transmembrane region" description="Helical; Name=6" evidence="2">
    <location>
        <begin position="178"/>
        <end position="203"/>
    </location>
</feature>
<feature type="topological domain" description="Extracellular" evidence="2">
    <location>
        <begin position="204"/>
        <end position="211"/>
    </location>
</feature>
<feature type="transmembrane region" description="Helical; Name=7" evidence="2">
    <location>
        <begin position="212"/>
        <end position="237"/>
    </location>
</feature>
<feature type="topological domain" description="Cytoplasmic" evidence="2">
    <location>
        <begin position="238"/>
        <end position="247" status="greater than"/>
    </location>
</feature>
<feature type="short sequence motif" description="DRY motif; important for ligand-induced conformation changes" evidence="4">
    <location>
        <begin position="27"/>
        <end position="29"/>
    </location>
</feature>
<feature type="short sequence motif" description="NPxxY motif; important for ligand-induced conformation changes and signaling" evidence="4">
    <location>
        <begin position="231"/>
        <end position="235"/>
    </location>
</feature>
<feature type="binding site" evidence="2">
    <location>
        <position position="10"/>
    </location>
    <ligand>
        <name>serotonin</name>
        <dbReference type="ChEBI" id="CHEBI:350546"/>
    </ligand>
</feature>
<feature type="binding site" evidence="2">
    <location>
        <position position="198"/>
    </location>
    <ligand>
        <name>serotonin</name>
        <dbReference type="ChEBI" id="CHEBI:350546"/>
    </ligand>
</feature>
<feature type="site" description="Hydrophobic barrier that decreases the speed of ligand binding and dissociation" evidence="2">
    <location>
        <position position="84"/>
    </location>
</feature>
<feature type="modified residue" description="Phosphoserine" evidence="2">
    <location>
        <position position="135"/>
    </location>
</feature>
<feature type="disulfide bond" evidence="5">
    <location>
        <begin position="3"/>
        <end position="82"/>
    </location>
</feature>
<feature type="disulfide bond" evidence="5">
    <location>
        <begin position="204"/>
        <end position="208"/>
    </location>
</feature>
<feature type="non-terminal residue">
    <location>
        <position position="1"/>
    </location>
</feature>
<feature type="non-terminal residue">
    <location>
        <position position="247"/>
    </location>
</feature>
<protein>
    <recommendedName>
        <fullName>5-hydroxytryptamine receptor 2A</fullName>
        <shortName>5-HT-2</shortName>
        <shortName>5-HT-2A</shortName>
    </recommendedName>
    <alternativeName>
        <fullName>Serotonin receptor 2A</fullName>
    </alternativeName>
</protein>
<keyword id="KW-0085">Behavior</keyword>
<keyword id="KW-1003">Cell membrane</keyword>
<keyword id="KW-0966">Cell projection</keyword>
<keyword id="KW-0968">Cytoplasmic vesicle</keyword>
<keyword id="KW-1015">Disulfide bond</keyword>
<keyword id="KW-0297">G-protein coupled receptor</keyword>
<keyword id="KW-0472">Membrane</keyword>
<keyword id="KW-0597">Phosphoprotein</keyword>
<keyword id="KW-0675">Receptor</keyword>
<keyword id="KW-1185">Reference proteome</keyword>
<keyword id="KW-0770">Synapse</keyword>
<keyword id="KW-0807">Transducer</keyword>
<keyword id="KW-0812">Transmembrane</keyword>
<keyword id="KW-1133">Transmembrane helix</keyword>
<comment type="function">
    <text evidence="2 3 7">G-protein coupled receptor for 5-hydroxytryptamine (serotonin) (PubMed:8113814). Also functions as a receptor for various drugs and psychoactive substances, including mescaline, psilocybin, 1-(2,5-dimethoxy-4-iodophenyl)-2-aminopropane (DOI) and lysergic acid diethylamide (LSD) (By similarity). Ligand binding causes a conformation change that triggers signaling via guanine nucleotide-binding proteins (G proteins) and modulates the activity of downstream effectors (By similarity). HTR2A is coupled to G(q)/G(11) G alpha proteins and activates phospholipase C-beta, releasing diacylglycerol (DAG) and inositol 1,4,5-trisphosphate (IP3) second messengers that modulate the activity of phosphatidylinositol 3-kinase and promote the release of Ca(2+) ions from intracellular stores, respectively (By similarity). Beta-arrestin family members inhibit signaling via G proteins and mediate activation of alternative signaling pathways (By similarity). Affects neural activity, perception, cognition and mood (By similarity). Plays a role in the regulation of behavior, including responses to anxiogenic situations and psychoactive substances (By similarity). Plays a role in intestinal smooth muscle contraction, and may play a role in arterial vasoconstriction (By similarity).</text>
</comment>
<comment type="activity regulation">
    <text evidence="2">G-protein coupled receptor activity is regulated by lipids: oleamide increases HTR2A-mediated activity.</text>
</comment>
<comment type="subunit">
    <text evidence="2">Interacts (via C-terminus) with MPDZ and PATJ. May interact (via C-terminus) with MPP3, PRDX6, DLG4, DLG1, CASK, APBA1 and MAGI2. Interacts with GRM2 and DRD2; this may affect signaling.</text>
</comment>
<comment type="subcellular location">
    <subcellularLocation>
        <location evidence="7">Cell membrane</location>
        <topology evidence="7">Multi-pass membrane protein</topology>
    </subcellularLocation>
    <subcellularLocation>
        <location evidence="3">Cell projection</location>
        <location evidence="3">Dendrite</location>
    </subcellularLocation>
    <subcellularLocation>
        <location evidence="1">Cell projection</location>
        <location evidence="1">Axon</location>
    </subcellularLocation>
    <subcellularLocation>
        <location evidence="1">Cytoplasmic vesicle</location>
    </subcellularLocation>
    <subcellularLocation>
        <location evidence="1">Membrane</location>
        <location evidence="1">Caveola</location>
    </subcellularLocation>
    <subcellularLocation>
        <location evidence="1">Presynapse</location>
    </subcellularLocation>
</comment>
<comment type="tissue specificity">
    <text evidence="6">Detected in adult intestine, especially in mucosal epithelium, longitudinal and circular layers of muscularis externa and myenteric plexuses. Highly expressed in Paneth cells, and detected at lower levels in enterocytes (at protein level).</text>
</comment>
<comment type="domain">
    <text evidence="2">The PDZ domain-binding motif is involved in the interaction with PATJ, CASK, APBA1, DLG1 and DLG4.</text>
</comment>
<comment type="similarity">
    <text evidence="5">Belongs to the G-protein coupled receptor 1 family.</text>
</comment>
<name>5HT2A_CAVPO</name>
<reference key="1">
    <citation type="journal article" date="1994" name="J. Neurochem.">
        <title>Disruption of potential alpha-helix in the G loop of the guinea pig 5-hydroxytryptamine2 receptor does not prevent receptor coupling to phosphoinositide hydrolysis.</title>
        <authorList>
            <person name="Watts S.W."/>
            <person name="Cohen M.L."/>
            <person name="Mooney P.Q."/>
            <person name="Johnson B.G."/>
            <person name="Schoepp D.D."/>
            <person name="Baez M."/>
        </authorList>
    </citation>
    <scope>NUCLEOTIDE SEQUENCE [MRNA]</scope>
    <scope>FUNCTION</scope>
    <scope>SUBCELLULAR LOCATION</scope>
    <source>
        <tissue>Brain</tissue>
    </source>
</reference>
<reference key="2">
    <citation type="journal article" date="2002" name="Am. J. Physiol.">
        <title>5-HT(2A) receptors: location and functional analysis in intestines of wild-type and 5-HT(2A) knockout mice.</title>
        <authorList>
            <person name="Fiorica-Howells E."/>
            <person name="Hen R."/>
            <person name="Gingrich J."/>
            <person name="Li Z."/>
            <person name="Gershon M.D."/>
        </authorList>
    </citation>
    <scope>TISSUE SPECIFICITY</scope>
</reference>